<protein>
    <recommendedName>
        <fullName evidence="5">Prenytransferase adrG</fullName>
        <ecNumber evidence="7">2.5.1.-</ecNumber>
    </recommendedName>
    <alternativeName>
        <fullName evidence="5">Andrastin A biosynthesis cluster protein G</fullName>
    </alternativeName>
</protein>
<feature type="chain" id="PRO_0000446485" description="Prenytransferase adrG">
    <location>
        <begin position="1"/>
        <end position="316"/>
    </location>
</feature>
<feature type="transmembrane region" description="Helical" evidence="3">
    <location>
        <begin position="36"/>
        <end position="56"/>
    </location>
</feature>
<feature type="transmembrane region" description="Helical" evidence="3">
    <location>
        <begin position="60"/>
        <end position="80"/>
    </location>
</feature>
<feature type="transmembrane region" description="Helical" evidence="3">
    <location>
        <begin position="131"/>
        <end position="151"/>
    </location>
</feature>
<feature type="transmembrane region" description="Helical" evidence="3">
    <location>
        <begin position="163"/>
        <end position="183"/>
    </location>
</feature>
<feature type="transmembrane region" description="Helical" evidence="3">
    <location>
        <begin position="191"/>
        <end position="211"/>
    </location>
</feature>
<feature type="transmembrane region" description="Helical" evidence="3">
    <location>
        <begin position="247"/>
        <end position="267"/>
    </location>
</feature>
<feature type="transmembrane region" description="Helical" evidence="3">
    <location>
        <begin position="294"/>
        <end position="314"/>
    </location>
</feature>
<gene>
    <name evidence="5" type="primary">adrG</name>
</gene>
<dbReference type="EC" id="2.5.1.-" evidence="7"/>
<dbReference type="EMBL" id="KY349137">
    <property type="protein sequence ID" value="ART41212.1"/>
    <property type="molecule type" value="Genomic_DNA"/>
</dbReference>
<dbReference type="SMR" id="A0A1Y0BRF7"/>
<dbReference type="OMA" id="FGTWIRP"/>
<dbReference type="UniPathway" id="UPA00213"/>
<dbReference type="GO" id="GO:0005743">
    <property type="term" value="C:mitochondrial inner membrane"/>
    <property type="evidence" value="ECO:0007669"/>
    <property type="project" value="TreeGrafter"/>
</dbReference>
<dbReference type="GO" id="GO:0008412">
    <property type="term" value="F:4-hydroxybenzoate polyprenyltransferase activity"/>
    <property type="evidence" value="ECO:0007669"/>
    <property type="project" value="TreeGrafter"/>
</dbReference>
<dbReference type="GO" id="GO:0016114">
    <property type="term" value="P:terpenoid biosynthetic process"/>
    <property type="evidence" value="ECO:0007669"/>
    <property type="project" value="UniProtKB-UniPathway"/>
</dbReference>
<dbReference type="GO" id="GO:0006744">
    <property type="term" value="P:ubiquinone biosynthetic process"/>
    <property type="evidence" value="ECO:0007669"/>
    <property type="project" value="TreeGrafter"/>
</dbReference>
<dbReference type="CDD" id="cd13959">
    <property type="entry name" value="PT_UbiA_COQ2"/>
    <property type="match status" value="1"/>
</dbReference>
<dbReference type="FunFam" id="1.10.357.140:FF:000008">
    <property type="entry name" value="4-hydroxybenzoate octaprenyltransferase"/>
    <property type="match status" value="1"/>
</dbReference>
<dbReference type="Gene3D" id="1.10.357.140">
    <property type="entry name" value="UbiA prenyltransferase"/>
    <property type="match status" value="1"/>
</dbReference>
<dbReference type="Gene3D" id="1.20.120.1780">
    <property type="entry name" value="UbiA prenyltransferase"/>
    <property type="match status" value="1"/>
</dbReference>
<dbReference type="InterPro" id="IPR039653">
    <property type="entry name" value="Prenyltransferase"/>
</dbReference>
<dbReference type="InterPro" id="IPR000537">
    <property type="entry name" value="UbiA_prenyltransferase"/>
</dbReference>
<dbReference type="InterPro" id="IPR044878">
    <property type="entry name" value="UbiA_sf"/>
</dbReference>
<dbReference type="PANTHER" id="PTHR11048:SF39">
    <property type="entry name" value="POLYPRENYL TRANSFERASE AUSN"/>
    <property type="match status" value="1"/>
</dbReference>
<dbReference type="PANTHER" id="PTHR11048">
    <property type="entry name" value="PRENYLTRANSFERASES"/>
    <property type="match status" value="1"/>
</dbReference>
<dbReference type="Pfam" id="PF01040">
    <property type="entry name" value="UbiA"/>
    <property type="match status" value="1"/>
</dbReference>
<proteinExistence type="inferred from homology"/>
<accession>A0A1Y0BRF7</accession>
<keyword id="KW-0460">Magnesium</keyword>
<keyword id="KW-0472">Membrane</keyword>
<keyword id="KW-0808">Transferase</keyword>
<keyword id="KW-0812">Transmembrane</keyword>
<keyword id="KW-1133">Transmembrane helix</keyword>
<reference key="1">
    <citation type="journal article" date="2017" name="Front. Microbiol.">
        <title>The biosynthetic gene cluster for andrastin A in Penicillium roqueforti.</title>
        <authorList>
            <person name="Rojas-Aedo J.F."/>
            <person name="Gil-Duran C."/>
            <person name="Del-Cid A."/>
            <person name="Valdes N."/>
            <person name="Alamos P."/>
            <person name="Vaca I."/>
            <person name="Garcia-Rico R.O."/>
            <person name="Levican G."/>
            <person name="Tello M."/>
            <person name="Chavez R."/>
        </authorList>
    </citation>
    <scope>NUCLEOTIDE SEQUENCE [GENOMIC DNA]</scope>
    <scope>IDENTIFICATION</scope>
    <scope>FUNCTION</scope>
    <scope>DISRUPTION PHENOTYPE</scope>
    <source>
        <strain>CECT 2905</strain>
    </source>
</reference>
<name>ADRG_PENRO</name>
<evidence type="ECO:0000250" key="1">
    <source>
        <dbReference type="UniProtKB" id="B6HV35"/>
    </source>
</evidence>
<evidence type="ECO:0000250" key="2">
    <source>
        <dbReference type="UniProtKB" id="P32378"/>
    </source>
</evidence>
<evidence type="ECO:0000255" key="3"/>
<evidence type="ECO:0000269" key="4">
    <source>
    </source>
</evidence>
<evidence type="ECO:0000303" key="5">
    <source>
    </source>
</evidence>
<evidence type="ECO:0000305" key="6"/>
<evidence type="ECO:0000305" key="7">
    <source>
    </source>
</evidence>
<sequence>MTRGNEKEEAPPQAKILGSFPTGIAPYAELMRVHRLLGFYLNTSPYLVGVAFCASISPTKIPITVLLHRTILLSIWSIFLRSAGCVWDDLIDMDLDSQISRTRTRPLPRGAVSPKNAFLLTVTLFACGGSVLIYLPWPCAVDCLIITFFALLYPFGKRFTDYPQITLVNIGWAIPMAMHSLGLDPLSQMKPTVCMFLFIGLVIIMIDVIYSRQDTEEDLKVGVKSMAVRFRESIELLSYSLLYASTGFLAMAGFFTGLGLSFFVVSVGGHFCGFWVLLKATRVGNSYGVESYAKSAFFLATLFWLFGFVIEYCLRN</sequence>
<organism>
    <name type="scientific">Penicillium roqueforti</name>
    <dbReference type="NCBI Taxonomy" id="5082"/>
    <lineage>
        <taxon>Eukaryota</taxon>
        <taxon>Fungi</taxon>
        <taxon>Dikarya</taxon>
        <taxon>Ascomycota</taxon>
        <taxon>Pezizomycotina</taxon>
        <taxon>Eurotiomycetes</taxon>
        <taxon>Eurotiomycetidae</taxon>
        <taxon>Eurotiales</taxon>
        <taxon>Aspergillaceae</taxon>
        <taxon>Penicillium</taxon>
    </lineage>
</organism>
<comment type="function">
    <text evidence="1 4">Prenytransferase; part of the gene cluster that mediates the biosynthesis of andrastins, meroterpenoid compounds that exhibit inhibitory activity against ras farnesyltransferase, suggesting that they could be promising leads for antitumor agents (PubMed:28529508). The first step of the pathway is the synthesis of 3,5-dimethylorsellinic acid (DMOA) by the polyketide synthase adrD via condensation of one acetyl-CoA starter unit with 3 malonyl-CoA units and 2 methylations (By similarity). DMAO is then converted to farnesyl-DMAO by the prenyltransferase adrG (By similarity). The methyltransferase adrK catalyzes the methylation of the carboxyl group of farnesyl-DMAO to farnesyl-DMAO methyl ester which is further converted to epoxyfarnesyl-DMAO methyl ester by the FAD-dependent monooxygenase adrH (By similarity). The terpene cyclase adrI then catalyzes the carbon skeletal rearrangement to generate the andrastin E, the first compound in the pathway having the andrastin scaffold, with the tetracyclic ring system (By similarity). The post-cyclization tailoring enzymes adrF, adrE, adrJ, and adrA, are involved in the conversion of andrastin E into andrastin A. The short chain dehydrogenase adrF is responsible for the oxidation of the C-3 a hydroxyl group of andrastin E to yield the corresponding ketone, andrastin D. The ketoreductase adrE stereoselectively reduces the carbonyl moiety to reverse the stereochemistry of the C-3 position to yield andrastin F. The acetyltransferase adrJ is the acetyltransferase that attaches the acetyl group to the C-3 hydroxyl group of andrastin F to yield andrastin C. Finally, the cytochrome P450 monooxygenase adrA catalyzes two sequential oxidation reactions of the C-23 methyl group, to generate the corresponding alcohol andrastin B, and aldehyde andrastin A (By similarity).</text>
</comment>
<comment type="catalytic activity">
    <reaction evidence="7">
        <text>3,5-dimethylorsellinate + (2E,6E)-farnesyl diphosphate = (3R)-3-farnesyl-6-hydroxy-2,3,5-trimethyl-4-oxocyclohexa-1,5-diene-1-carboxylate + diphosphate + H(+)</text>
        <dbReference type="Rhea" id="RHEA:49632"/>
        <dbReference type="ChEBI" id="CHEBI:15378"/>
        <dbReference type="ChEBI" id="CHEBI:33019"/>
        <dbReference type="ChEBI" id="CHEBI:131856"/>
        <dbReference type="ChEBI" id="CHEBI:131857"/>
        <dbReference type="ChEBI" id="CHEBI:175763"/>
    </reaction>
    <physiologicalReaction direction="left-to-right" evidence="7">
        <dbReference type="Rhea" id="RHEA:49633"/>
    </physiologicalReaction>
</comment>
<comment type="cofactor">
    <cofactor evidence="2">
        <name>Mg(2+)</name>
        <dbReference type="ChEBI" id="CHEBI:18420"/>
    </cofactor>
</comment>
<comment type="pathway">
    <text evidence="4">Secondary metabolite biosynthesis; terpenoid biosynthesis.</text>
</comment>
<comment type="subcellular location">
    <subcellularLocation>
        <location evidence="3">Membrane</location>
        <topology evidence="3">Multi-pass membrane protein</topology>
    </subcellularLocation>
</comment>
<comment type="disruption phenotype">
    <text evidence="4">Drastically reduces the production of andrastin A.</text>
</comment>
<comment type="similarity">
    <text evidence="6">Belongs to the UbiA prenyltransferase family.</text>
</comment>